<comment type="function">
    <text>Catalyzes the initial reaction in O-linked oligosaccharide biosynthesis, the transfer of an N-acetyl-D-galactosamine residue to a serine or threonine residue on the protein receptor. Has activity toward Muc5Ac and EA2 peptide substrates.</text>
</comment>
<comment type="catalytic activity">
    <reaction evidence="4">
        <text>L-seryl-[protein] + UDP-N-acetyl-alpha-D-galactosamine = a 3-O-[N-acetyl-alpha-D-galactosaminyl]-L-seryl-[protein] + UDP + H(+)</text>
        <dbReference type="Rhea" id="RHEA:23956"/>
        <dbReference type="Rhea" id="RHEA-COMP:9863"/>
        <dbReference type="Rhea" id="RHEA-COMP:12788"/>
        <dbReference type="ChEBI" id="CHEBI:15378"/>
        <dbReference type="ChEBI" id="CHEBI:29999"/>
        <dbReference type="ChEBI" id="CHEBI:53604"/>
        <dbReference type="ChEBI" id="CHEBI:58223"/>
        <dbReference type="ChEBI" id="CHEBI:67138"/>
        <dbReference type="EC" id="2.4.1.41"/>
    </reaction>
</comment>
<comment type="catalytic activity">
    <reaction evidence="4">
        <text>L-threonyl-[protein] + UDP-N-acetyl-alpha-D-galactosamine = a 3-O-[N-acetyl-alpha-D-galactosaminyl]-L-threonyl-[protein] + UDP + H(+)</text>
        <dbReference type="Rhea" id="RHEA:52424"/>
        <dbReference type="Rhea" id="RHEA-COMP:11060"/>
        <dbReference type="Rhea" id="RHEA-COMP:11689"/>
        <dbReference type="ChEBI" id="CHEBI:15378"/>
        <dbReference type="ChEBI" id="CHEBI:30013"/>
        <dbReference type="ChEBI" id="CHEBI:58223"/>
        <dbReference type="ChEBI" id="CHEBI:67138"/>
        <dbReference type="ChEBI" id="CHEBI:87075"/>
        <dbReference type="EC" id="2.4.1.41"/>
    </reaction>
</comment>
<comment type="cofactor">
    <cofactor evidence="1">
        <name>Mn(2+)</name>
        <dbReference type="ChEBI" id="CHEBI:29035"/>
    </cofactor>
</comment>
<comment type="pathway">
    <text>Protein modification; protein glycosylation.</text>
</comment>
<comment type="subcellular location">
    <subcellularLocation>
        <location evidence="1">Golgi apparatus membrane</location>
        <topology evidence="1">Single-pass type II membrane protein</topology>
    </subcellularLocation>
</comment>
<comment type="tissue specificity">
    <text evidence="4">Highly expressed in the sublingual gland, testis, small intestine, colon and ovary. Expressed at intermediate level in heart, brain, spleen, lung, stomach, cervix and uterus.</text>
</comment>
<comment type="domain">
    <text evidence="1">There are two conserved domains in the glycosyltransferase region: the N-terminal domain (domain A, also called GT1 motif), which is probably involved in manganese coordination and substrate binding and the C-terminal domain (domain B, also called Gal/GalNAc-T motif), which is probably involved in catalytic reaction and UDP-Gal binding.</text>
</comment>
<comment type="domain">
    <text evidence="1">The ricin B-type lectin domain binds to GalNAc and contributes to the glycopeptide specificity.</text>
</comment>
<comment type="similarity">
    <text evidence="5">Belongs to the glycosyltransferase 2 family. GalNAc-T subfamily.</text>
</comment>
<comment type="caution">
    <text evidence="5">According to PubMed:11278534, this enzyme is unable to transfer GalNAc onto serine or threonine residue on the protein receptor, but instead requires the prior addition of a GalNAc on a peptide before adding additional GalNAc moieties, thereby acting as a glycopeptide transferase.</text>
</comment>
<comment type="caution">
    <text evidence="6">Was originally termed Galnt9/pp-GaNTase 9.</text>
</comment>
<organism>
    <name type="scientific">Rattus norvegicus</name>
    <name type="common">Rat</name>
    <dbReference type="NCBI Taxonomy" id="10116"/>
    <lineage>
        <taxon>Eukaryota</taxon>
        <taxon>Metazoa</taxon>
        <taxon>Chordata</taxon>
        <taxon>Craniata</taxon>
        <taxon>Vertebrata</taxon>
        <taxon>Euteleostomi</taxon>
        <taxon>Mammalia</taxon>
        <taxon>Eutheria</taxon>
        <taxon>Euarchontoglires</taxon>
        <taxon>Glires</taxon>
        <taxon>Rodentia</taxon>
        <taxon>Myomorpha</taxon>
        <taxon>Muroidea</taxon>
        <taxon>Muridae</taxon>
        <taxon>Murinae</taxon>
        <taxon>Rattus</taxon>
    </lineage>
</organism>
<accession>Q925R7</accession>
<sequence>MRRKEKRLLQAVALALAALVLLPNVGLWALYRERQPDGSPGGSGAAVAPEAIQELHSRQKKTLFLGAEQRLKDWHNKEAIRRDAQRVGNGEQGKPYPMTDAERVDQAYRENGFNIYVSDKISLNRSLPDIRHPNCNSKLYLETLPNTSIIIPFHNEGWSSLLRTVHSVLNRSPPELVAEIVLVDDFSDREHLKKPLEDYMALFPSVRILRTKKREGLIRTRMLGASAATGDVITFLDSHCEANVNWLPPLLDRIARNRKTIVCPMIDVIDHDDFRYETQAGDAMRGAFDWEMYYKRIPIPPELQKADPSDPFESPVMAGGLFAVDRKWFWELGGYDPGLEIWGGEQYEISFKVWMCGGRMEDIPCSRVGHIYRKYVPYKVPAGVSLARNLKRVAEVWMDEYAEYIYQRRPEYRHLSAGDVVAQKKLRGSLNCKSFKWFMTKIAWDLPKFYPPVEPPAAAWGEIRNVGTGLCTDTKHGTLGSPLRLETCIRGRGEAAWNSMQVFTFTWREDIRPGDPQHTKKFCFDAVSHTSPVTLYDCHSMKGNQLWKYRKDKTLYHPVSGSCMDCSESDHRIFMNTCNPSSLTQQWLFEHTNSTVLENFNRN</sequence>
<protein>
    <recommendedName>
        <fullName>Polypeptide N-acetylgalactosaminyltransferase 10</fullName>
        <ecNumber>2.4.1.41</ecNumber>
    </recommendedName>
    <alternativeName>
        <fullName>Polypeptide GalNAc transferase 10</fullName>
        <shortName>GalNAc-T10</shortName>
        <shortName>pp-GaNTase 10</shortName>
    </alternativeName>
    <alternativeName>
        <fullName>Protein-UDP acetylgalactosaminyltransferase 10</fullName>
    </alternativeName>
    <alternativeName>
        <fullName>UDP-GalNAc:polypeptide N-acetylgalactosaminyltransferase 10</fullName>
    </alternativeName>
</protein>
<feature type="chain" id="PRO_0000059124" description="Polypeptide N-acetylgalactosaminyltransferase 10">
    <location>
        <begin position="1"/>
        <end position="603"/>
    </location>
</feature>
<feature type="topological domain" description="Cytoplasmic" evidence="2">
    <location>
        <begin position="1"/>
        <end position="11"/>
    </location>
</feature>
<feature type="transmembrane region" description="Helical; Signal-anchor for type II membrane protein" evidence="2">
    <location>
        <begin position="12"/>
        <end position="31"/>
    </location>
</feature>
<feature type="topological domain" description="Lumenal" evidence="2">
    <location>
        <begin position="32"/>
        <end position="603"/>
    </location>
</feature>
<feature type="domain" description="Ricin B-type lectin" evidence="3">
    <location>
        <begin position="458"/>
        <end position="590"/>
    </location>
</feature>
<feature type="region of interest" description="Catalytic subdomain A">
    <location>
        <begin position="144"/>
        <end position="253"/>
    </location>
</feature>
<feature type="region of interest" description="Catalytic subdomain B">
    <location>
        <begin position="311"/>
        <end position="373"/>
    </location>
</feature>
<feature type="region of interest" description="Flexible loop" evidence="1">
    <location>
        <begin position="373"/>
        <end position="384"/>
    </location>
</feature>
<feature type="binding site" evidence="1">
    <location>
        <position position="185"/>
    </location>
    <ligand>
        <name>substrate</name>
    </ligand>
</feature>
<feature type="binding site" evidence="1">
    <location>
        <position position="214"/>
    </location>
    <ligand>
        <name>substrate</name>
    </ligand>
</feature>
<feature type="binding site" evidence="1">
    <location>
        <position position="237"/>
    </location>
    <ligand>
        <name>Mn(2+)</name>
        <dbReference type="ChEBI" id="CHEBI:29035"/>
    </ligand>
</feature>
<feature type="binding site" evidence="1">
    <location>
        <position position="238"/>
    </location>
    <ligand>
        <name>substrate</name>
    </ligand>
</feature>
<feature type="binding site" evidence="1">
    <location>
        <position position="239"/>
    </location>
    <ligand>
        <name>Mn(2+)</name>
        <dbReference type="ChEBI" id="CHEBI:29035"/>
    </ligand>
</feature>
<feature type="binding site" evidence="1">
    <location>
        <position position="342"/>
    </location>
    <ligand>
        <name>substrate</name>
    </ligand>
</feature>
<feature type="binding site" evidence="1">
    <location>
        <position position="370"/>
    </location>
    <ligand>
        <name>Mn(2+)</name>
        <dbReference type="ChEBI" id="CHEBI:29035"/>
    </ligand>
</feature>
<feature type="binding site" evidence="1">
    <location>
        <position position="373"/>
    </location>
    <ligand>
        <name>substrate</name>
    </ligand>
</feature>
<feature type="binding site" evidence="1">
    <location>
        <position position="378"/>
    </location>
    <ligand>
        <name>substrate</name>
    </ligand>
</feature>
<feature type="glycosylation site" description="N-linked (GlcNAc...) asparagine" evidence="2">
    <location>
        <position position="124"/>
    </location>
</feature>
<feature type="glycosylation site" description="N-linked (GlcNAc...) asparagine" evidence="2">
    <location>
        <position position="146"/>
    </location>
</feature>
<feature type="glycosylation site" description="N-linked (GlcNAc...) asparagine" evidence="2">
    <location>
        <position position="593"/>
    </location>
</feature>
<feature type="disulfide bond" evidence="3">
    <location>
        <begin position="135"/>
        <end position="365"/>
    </location>
</feature>
<feature type="disulfide bond" evidence="3">
    <location>
        <begin position="356"/>
        <end position="432"/>
    </location>
</feature>
<feature type="disulfide bond" evidence="3">
    <location>
        <begin position="471"/>
        <end position="488"/>
    </location>
</feature>
<feature type="disulfide bond" evidence="3">
    <location>
        <begin position="523"/>
        <end position="538"/>
    </location>
</feature>
<feature type="disulfide bond" evidence="3">
    <location>
        <begin position="563"/>
        <end position="578"/>
    </location>
</feature>
<evidence type="ECO:0000250" key="1"/>
<evidence type="ECO:0000255" key="2"/>
<evidence type="ECO:0000255" key="3">
    <source>
        <dbReference type="PROSITE-ProRule" id="PRU00174"/>
    </source>
</evidence>
<evidence type="ECO:0000269" key="4">
    <source>
    </source>
</evidence>
<evidence type="ECO:0000305" key="5"/>
<evidence type="ECO:0000305" key="6">
    <source>
    </source>
</evidence>
<name>GLT10_RAT</name>
<keyword id="KW-1015">Disulfide bond</keyword>
<keyword id="KW-0325">Glycoprotein</keyword>
<keyword id="KW-0328">Glycosyltransferase</keyword>
<keyword id="KW-0333">Golgi apparatus</keyword>
<keyword id="KW-0430">Lectin</keyword>
<keyword id="KW-0464">Manganese</keyword>
<keyword id="KW-0472">Membrane</keyword>
<keyword id="KW-0479">Metal-binding</keyword>
<keyword id="KW-1185">Reference proteome</keyword>
<keyword id="KW-0735">Signal-anchor</keyword>
<keyword id="KW-0808">Transferase</keyword>
<keyword id="KW-0812">Transmembrane</keyword>
<keyword id="KW-1133">Transmembrane helix</keyword>
<proteinExistence type="evidence at transcript level"/>
<reference key="1">
    <citation type="journal article" date="2001" name="J. Biol. Chem.">
        <title>Cloning and characterization of a ninth member of the UDP-GalNAc:polypeptide N-acetylgalactosaminyltransferase family, ppGaNTase-T9.</title>
        <authorList>
            <person name="Ten Hagen K.G."/>
            <person name="Bedi G.S."/>
            <person name="Tetaert D."/>
            <person name="Kingsley P.D."/>
            <person name="Hagen F.K."/>
            <person name="Balys M.M."/>
            <person name="Beres T.M."/>
            <person name="Degand P."/>
            <person name="Tabak L.A."/>
        </authorList>
    </citation>
    <scope>NUCLEOTIDE SEQUENCE [MRNA]</scope>
    <scope>ENZYME ACTIVITY</scope>
    <scope>TISSUE SPECIFICITY</scope>
    <source>
        <tissue>Sublingual gland</tissue>
    </source>
</reference>
<gene>
    <name type="primary">Galnt10</name>
</gene>
<dbReference type="EC" id="2.4.1.41"/>
<dbReference type="EMBL" id="AF241241">
    <property type="protein sequence ID" value="AAK54498.1"/>
    <property type="molecule type" value="mRNA"/>
</dbReference>
<dbReference type="RefSeq" id="NP_570098.1">
    <property type="nucleotide sequence ID" value="NM_130742.2"/>
</dbReference>
<dbReference type="SMR" id="Q925R7"/>
<dbReference type="FunCoup" id="Q925R7">
    <property type="interactions" value="1150"/>
</dbReference>
<dbReference type="STRING" id="10116.ENSRNOP00000003447"/>
<dbReference type="CAZy" id="CBM13">
    <property type="family name" value="Carbohydrate-Binding Module Family 13"/>
</dbReference>
<dbReference type="CAZy" id="GT27">
    <property type="family name" value="Glycosyltransferase Family 27"/>
</dbReference>
<dbReference type="GlyCosmos" id="Q925R7">
    <property type="glycosylation" value="3 sites, No reported glycans"/>
</dbReference>
<dbReference type="GlyGen" id="Q925R7">
    <property type="glycosylation" value="3 sites"/>
</dbReference>
<dbReference type="PhosphoSitePlus" id="Q925R7"/>
<dbReference type="PaxDb" id="10116-ENSRNOP00000003447"/>
<dbReference type="GeneID" id="170501"/>
<dbReference type="KEGG" id="rno:170501"/>
<dbReference type="UCSC" id="RGD:69409">
    <property type="organism name" value="rat"/>
</dbReference>
<dbReference type="AGR" id="RGD:69409"/>
<dbReference type="CTD" id="55568"/>
<dbReference type="RGD" id="69409">
    <property type="gene designation" value="Galnt10"/>
</dbReference>
<dbReference type="VEuPathDB" id="HostDB:ENSRNOG00000002488"/>
<dbReference type="eggNOG" id="KOG3736">
    <property type="taxonomic scope" value="Eukaryota"/>
</dbReference>
<dbReference type="HOGENOM" id="CLU_013477_0_1_1"/>
<dbReference type="InParanoid" id="Q925R7"/>
<dbReference type="PhylomeDB" id="Q925R7"/>
<dbReference type="TreeFam" id="TF313267"/>
<dbReference type="BRENDA" id="2.4.1.41">
    <property type="organism ID" value="5301"/>
</dbReference>
<dbReference type="Reactome" id="R-RNO-913709">
    <property type="pathway name" value="O-linked glycosylation of mucins"/>
</dbReference>
<dbReference type="UniPathway" id="UPA00378"/>
<dbReference type="PRO" id="PR:Q925R7"/>
<dbReference type="Proteomes" id="UP000002494">
    <property type="component" value="Chromosome 10"/>
</dbReference>
<dbReference type="Bgee" id="ENSRNOG00000002488">
    <property type="expression patterns" value="Expressed in colon and 18 other cell types or tissues"/>
</dbReference>
<dbReference type="GO" id="GO:0005794">
    <property type="term" value="C:Golgi apparatus"/>
    <property type="evidence" value="ECO:0000318"/>
    <property type="project" value="GO_Central"/>
</dbReference>
<dbReference type="GO" id="GO:0000139">
    <property type="term" value="C:Golgi membrane"/>
    <property type="evidence" value="ECO:0007669"/>
    <property type="project" value="UniProtKB-SubCell"/>
</dbReference>
<dbReference type="GO" id="GO:0030246">
    <property type="term" value="F:carbohydrate binding"/>
    <property type="evidence" value="ECO:0007669"/>
    <property type="project" value="UniProtKB-KW"/>
</dbReference>
<dbReference type="GO" id="GO:0046872">
    <property type="term" value="F:metal ion binding"/>
    <property type="evidence" value="ECO:0007669"/>
    <property type="project" value="UniProtKB-KW"/>
</dbReference>
<dbReference type="GO" id="GO:0004653">
    <property type="term" value="F:polypeptide N-acetylgalactosaminyltransferase activity"/>
    <property type="evidence" value="ECO:0000266"/>
    <property type="project" value="RGD"/>
</dbReference>
<dbReference type="GO" id="GO:0016266">
    <property type="term" value="P:O-glycan processing"/>
    <property type="evidence" value="ECO:0000266"/>
    <property type="project" value="RGD"/>
</dbReference>
<dbReference type="GO" id="GO:0006493">
    <property type="term" value="P:protein O-linked glycosylation"/>
    <property type="evidence" value="ECO:0000266"/>
    <property type="project" value="RGD"/>
</dbReference>
<dbReference type="CDD" id="cd23476">
    <property type="entry name" value="beta-trefoil_Ricin_GALNT10"/>
    <property type="match status" value="1"/>
</dbReference>
<dbReference type="CDD" id="cd02510">
    <property type="entry name" value="pp-GalNAc-T"/>
    <property type="match status" value="1"/>
</dbReference>
<dbReference type="FunFam" id="2.80.10.50:FF:000011">
    <property type="entry name" value="Polypeptide N-acetylgalactosaminyltransferase"/>
    <property type="match status" value="1"/>
</dbReference>
<dbReference type="FunFam" id="3.90.550.10:FF:000029">
    <property type="entry name" value="Polypeptide N-acetylgalactosaminyltransferase"/>
    <property type="match status" value="1"/>
</dbReference>
<dbReference type="Gene3D" id="2.80.10.50">
    <property type="match status" value="1"/>
</dbReference>
<dbReference type="Gene3D" id="3.90.550.10">
    <property type="entry name" value="Spore Coat Polysaccharide Biosynthesis Protein SpsA, Chain A"/>
    <property type="match status" value="1"/>
</dbReference>
<dbReference type="InterPro" id="IPR045885">
    <property type="entry name" value="GalNAc-T"/>
</dbReference>
<dbReference type="InterPro" id="IPR001173">
    <property type="entry name" value="Glyco_trans_2-like"/>
</dbReference>
<dbReference type="InterPro" id="IPR029044">
    <property type="entry name" value="Nucleotide-diphossugar_trans"/>
</dbReference>
<dbReference type="InterPro" id="IPR035992">
    <property type="entry name" value="Ricin_B-like_lectins"/>
</dbReference>
<dbReference type="InterPro" id="IPR000772">
    <property type="entry name" value="Ricin_B_lectin"/>
</dbReference>
<dbReference type="PANTHER" id="PTHR11675">
    <property type="entry name" value="N-ACETYLGALACTOSAMINYLTRANSFERASE"/>
    <property type="match status" value="1"/>
</dbReference>
<dbReference type="PANTHER" id="PTHR11675:SF41">
    <property type="entry name" value="POLYPEPTIDE N-ACETYLGALACTOSAMINYLTRANSFERASE 10"/>
    <property type="match status" value="1"/>
</dbReference>
<dbReference type="Pfam" id="PF00535">
    <property type="entry name" value="Glycos_transf_2"/>
    <property type="match status" value="1"/>
</dbReference>
<dbReference type="Pfam" id="PF00652">
    <property type="entry name" value="Ricin_B_lectin"/>
    <property type="match status" value="1"/>
</dbReference>
<dbReference type="SMART" id="SM00458">
    <property type="entry name" value="RICIN"/>
    <property type="match status" value="1"/>
</dbReference>
<dbReference type="SUPFAM" id="SSF53448">
    <property type="entry name" value="Nucleotide-diphospho-sugar transferases"/>
    <property type="match status" value="1"/>
</dbReference>
<dbReference type="SUPFAM" id="SSF50370">
    <property type="entry name" value="Ricin B-like lectins"/>
    <property type="match status" value="1"/>
</dbReference>
<dbReference type="PROSITE" id="PS50231">
    <property type="entry name" value="RICIN_B_LECTIN"/>
    <property type="match status" value="1"/>
</dbReference>